<accession>B7LCE1</accession>
<name>YFEO_ECO55</name>
<dbReference type="EMBL" id="CU928145">
    <property type="protein sequence ID" value="CAU98550.1"/>
    <property type="molecule type" value="Genomic_DNA"/>
</dbReference>
<dbReference type="RefSeq" id="WP_000903109.1">
    <property type="nucleotide sequence ID" value="NC_011748.1"/>
</dbReference>
<dbReference type="SMR" id="B7LCE1"/>
<dbReference type="KEGG" id="eck:EC55989_2685"/>
<dbReference type="HOGENOM" id="CLU_053130_0_0_6"/>
<dbReference type="Proteomes" id="UP000000746">
    <property type="component" value="Chromosome"/>
</dbReference>
<dbReference type="GO" id="GO:0005886">
    <property type="term" value="C:plasma membrane"/>
    <property type="evidence" value="ECO:0007669"/>
    <property type="project" value="UniProtKB-SubCell"/>
</dbReference>
<dbReference type="GO" id="GO:0015108">
    <property type="term" value="F:chloride transmembrane transporter activity"/>
    <property type="evidence" value="ECO:0007669"/>
    <property type="project" value="InterPro"/>
</dbReference>
<dbReference type="GO" id="GO:0005216">
    <property type="term" value="F:monoatomic ion channel activity"/>
    <property type="evidence" value="ECO:0007669"/>
    <property type="project" value="UniProtKB-UniRule"/>
</dbReference>
<dbReference type="CDD" id="cd00400">
    <property type="entry name" value="Voltage_gated_ClC"/>
    <property type="match status" value="1"/>
</dbReference>
<dbReference type="FunFam" id="1.10.3080.10:FF:000007">
    <property type="entry name" value="Putative ion-transport protein YfeO"/>
    <property type="match status" value="1"/>
</dbReference>
<dbReference type="Gene3D" id="1.10.3080.10">
    <property type="entry name" value="Clc chloride channel"/>
    <property type="match status" value="1"/>
</dbReference>
<dbReference type="HAMAP" id="MF_01115">
    <property type="entry name" value="CLC_YfeO"/>
    <property type="match status" value="1"/>
</dbReference>
<dbReference type="InterPro" id="IPR022969">
    <property type="entry name" value="Chloride_channel_YfeO"/>
</dbReference>
<dbReference type="InterPro" id="IPR014743">
    <property type="entry name" value="Cl-channel_core"/>
</dbReference>
<dbReference type="InterPro" id="IPR001807">
    <property type="entry name" value="ClC"/>
</dbReference>
<dbReference type="InterPro" id="IPR050368">
    <property type="entry name" value="ClC-type_chloride_channel"/>
</dbReference>
<dbReference type="NCBIfam" id="NF002971">
    <property type="entry name" value="PRK03655.1"/>
    <property type="match status" value="1"/>
</dbReference>
<dbReference type="PANTHER" id="PTHR43427">
    <property type="entry name" value="CHLORIDE CHANNEL PROTEIN CLC-E"/>
    <property type="match status" value="1"/>
</dbReference>
<dbReference type="PANTHER" id="PTHR43427:SF9">
    <property type="entry name" value="ION-TRANSPORT PROTEIN YFEO-RELATED"/>
    <property type="match status" value="1"/>
</dbReference>
<dbReference type="Pfam" id="PF00654">
    <property type="entry name" value="Voltage_CLC"/>
    <property type="match status" value="1"/>
</dbReference>
<dbReference type="PRINTS" id="PR00762">
    <property type="entry name" value="CLCHANNEL"/>
</dbReference>
<dbReference type="SUPFAM" id="SSF81340">
    <property type="entry name" value="Clc chloride channel"/>
    <property type="match status" value="1"/>
</dbReference>
<evidence type="ECO:0000255" key="1">
    <source>
        <dbReference type="HAMAP-Rule" id="MF_01115"/>
    </source>
</evidence>
<comment type="subcellular location">
    <subcellularLocation>
        <location evidence="1">Cell membrane</location>
        <topology evidence="1">Multi-pass membrane protein</topology>
    </subcellularLocation>
</comment>
<comment type="similarity">
    <text evidence="1">Belongs to the chloride channel (TC 2.A.49) family.</text>
</comment>
<proteinExistence type="inferred from homology"/>
<organism>
    <name type="scientific">Escherichia coli (strain 55989 / EAEC)</name>
    <dbReference type="NCBI Taxonomy" id="585055"/>
    <lineage>
        <taxon>Bacteria</taxon>
        <taxon>Pseudomonadati</taxon>
        <taxon>Pseudomonadota</taxon>
        <taxon>Gammaproteobacteria</taxon>
        <taxon>Enterobacterales</taxon>
        <taxon>Enterobacteriaceae</taxon>
        <taxon>Escherichia</taxon>
    </lineage>
</organism>
<reference key="1">
    <citation type="journal article" date="2009" name="PLoS Genet.">
        <title>Organised genome dynamics in the Escherichia coli species results in highly diverse adaptive paths.</title>
        <authorList>
            <person name="Touchon M."/>
            <person name="Hoede C."/>
            <person name="Tenaillon O."/>
            <person name="Barbe V."/>
            <person name="Baeriswyl S."/>
            <person name="Bidet P."/>
            <person name="Bingen E."/>
            <person name="Bonacorsi S."/>
            <person name="Bouchier C."/>
            <person name="Bouvet O."/>
            <person name="Calteau A."/>
            <person name="Chiapello H."/>
            <person name="Clermont O."/>
            <person name="Cruveiller S."/>
            <person name="Danchin A."/>
            <person name="Diard M."/>
            <person name="Dossat C."/>
            <person name="Karoui M.E."/>
            <person name="Frapy E."/>
            <person name="Garry L."/>
            <person name="Ghigo J.M."/>
            <person name="Gilles A.M."/>
            <person name="Johnson J."/>
            <person name="Le Bouguenec C."/>
            <person name="Lescat M."/>
            <person name="Mangenot S."/>
            <person name="Martinez-Jehanne V."/>
            <person name="Matic I."/>
            <person name="Nassif X."/>
            <person name="Oztas S."/>
            <person name="Petit M.A."/>
            <person name="Pichon C."/>
            <person name="Rouy Z."/>
            <person name="Ruf C.S."/>
            <person name="Schneider D."/>
            <person name="Tourret J."/>
            <person name="Vacherie B."/>
            <person name="Vallenet D."/>
            <person name="Medigue C."/>
            <person name="Rocha E.P.C."/>
            <person name="Denamur E."/>
        </authorList>
    </citation>
    <scope>NUCLEOTIDE SEQUENCE [LARGE SCALE GENOMIC DNA]</scope>
    <source>
        <strain>55989 / EAEC</strain>
    </source>
</reference>
<feature type="chain" id="PRO_1000164034" description="Putative ion-transport protein YfeO">
    <location>
        <begin position="1"/>
        <end position="418"/>
    </location>
</feature>
<feature type="transmembrane region" description="Helical" evidence="1">
    <location>
        <begin position="10"/>
        <end position="30"/>
    </location>
</feature>
<feature type="transmembrane region" description="Helical" evidence="1">
    <location>
        <begin position="54"/>
        <end position="74"/>
    </location>
</feature>
<feature type="transmembrane region" description="Helical" evidence="1">
    <location>
        <begin position="99"/>
        <end position="119"/>
    </location>
</feature>
<feature type="transmembrane region" description="Helical" evidence="1">
    <location>
        <begin position="120"/>
        <end position="140"/>
    </location>
</feature>
<feature type="transmembrane region" description="Helical" evidence="1">
    <location>
        <begin position="149"/>
        <end position="169"/>
    </location>
</feature>
<feature type="transmembrane region" description="Helical" evidence="1">
    <location>
        <begin position="186"/>
        <end position="206"/>
    </location>
</feature>
<feature type="transmembrane region" description="Helical" evidence="1">
    <location>
        <begin position="223"/>
        <end position="243"/>
    </location>
</feature>
<feature type="transmembrane region" description="Helical" evidence="1">
    <location>
        <begin position="258"/>
        <end position="278"/>
    </location>
</feature>
<feature type="transmembrane region" description="Helical" evidence="1">
    <location>
        <begin position="300"/>
        <end position="320"/>
    </location>
</feature>
<feature type="transmembrane region" description="Helical" evidence="1">
    <location>
        <begin position="322"/>
        <end position="342"/>
    </location>
</feature>
<feature type="transmembrane region" description="Helical" evidence="1">
    <location>
        <begin position="343"/>
        <end position="363"/>
    </location>
</feature>
<feature type="transmembrane region" description="Helical" evidence="1">
    <location>
        <begin position="371"/>
        <end position="391"/>
    </location>
</feature>
<keyword id="KW-1003">Cell membrane</keyword>
<keyword id="KW-0407">Ion channel</keyword>
<keyword id="KW-0406">Ion transport</keyword>
<keyword id="KW-0472">Membrane</keyword>
<keyword id="KW-1185">Reference proteome</keyword>
<keyword id="KW-0812">Transmembrane</keyword>
<keyword id="KW-1133">Transmembrane helix</keyword>
<keyword id="KW-0813">Transport</keyword>
<sequence>MLHPRARTMLLLSLPAVAIGIASSLILIVVMKIASALQNLLWQRLPGTLGIAQDSPLWIIGVLTLTGIAVGLVIRFSQGHAGPDPACEPLIGAPVPPSALPGLIVALILGLAGGVSLGPEHPIMTVNIALAVAIGARLLPRVNRMEWTILASAGTIGALFGTPVAAALIFSQTLNGSSEVPLWDRLFAPLMAAAAGALTTGLFFHPHFSLPIAHYGQMEMTDILSGAIVAAIAIAAGMVAVWCLPRLHSMMHQMKNPVLVLGIGGFILGILGVIGGPVSLFKGLDEMQQMVANQAFSTSDYFLLAVIKLAALVVAAASGFRGGRIFPAVFVGVALGLMLHEHVPAVPAAITVSCAILGIVLVVTRDGWLSLFMAAVVVPNTTLLPLLCIVMLPAWLLLAGKPMMMVNRPKQQPPHDNV</sequence>
<protein>
    <recommendedName>
        <fullName evidence="1">Putative ion-transport protein YfeO</fullName>
    </recommendedName>
</protein>
<gene>
    <name evidence="1" type="primary">yfeO</name>
    <name type="ordered locus">EC55989_2685</name>
</gene>